<gene>
    <name evidence="7" type="primary">Crcp</name>
</gene>
<proteinExistence type="evidence at transcript level"/>
<feature type="chain" id="PRO_0000079336" description="DNA-directed RNA polymerase III subunit RPC9">
    <location>
        <begin position="1"/>
        <end position="148"/>
    </location>
</feature>
<feature type="region of interest" description="Disordered" evidence="3">
    <location>
        <begin position="124"/>
        <end position="148"/>
    </location>
</feature>
<evidence type="ECO:0000250" key="1">
    <source>
        <dbReference type="UniProtKB" id="O75575"/>
    </source>
</evidence>
<evidence type="ECO:0000250" key="2">
    <source>
        <dbReference type="UniProtKB" id="Q9C0Z9"/>
    </source>
</evidence>
<evidence type="ECO:0000256" key="3">
    <source>
        <dbReference type="SAM" id="MobiDB-lite"/>
    </source>
</evidence>
<evidence type="ECO:0000269" key="4">
    <source>
    </source>
</evidence>
<evidence type="ECO:0000269" key="5">
    <source>
    </source>
</evidence>
<evidence type="ECO:0000305" key="6"/>
<evidence type="ECO:0000312" key="7">
    <source>
        <dbReference type="MGI" id="MGI:1100818"/>
    </source>
</evidence>
<comment type="function">
    <text evidence="1 2">DNA-dependent RNA polymerase catalyzes the transcription of DNA into RNA using the four ribonucleoside triphosphates as substrates (By similarity). Specific peripheric component of RNA polymerase III (Pol III) which synthesizes small non-coding RNAs including 5S rRNA, snRNAs, tRNAs and miRNAs from at least 500 distinct genomic loci. With POLR3H/RPC8 forms a mobile stalk that protrudes from Pol III core and functions primarily in transcription initiation (By similarity). Pol III plays a key role in sensing and limiting infection by intracellular bacteria and DNA viruses. Acts as nuclear and cytosolic DNA sensor involved in innate immune response. Can sense non-self dsDNA that serves as template for transcription into dsRNA. The non-self RNA polymerase III transcripts, such as Epstein-Barr virus-encoded RNAs (EBERs) induce type I interferon and NF-kappa-B through the RIG-I pathway (By similarity).</text>
</comment>
<comment type="function">
    <text evidence="5">Accessory protein for the calcitonin gene-related peptide (CGRP) receptor. It modulates CGRP responsiveness in a variety of tissues.</text>
</comment>
<comment type="subunit">
    <text evidence="1">Component of the RNA polymerase III complex consisting of 17 subunits: a ten-subunit horseshoe-shaped catalytic core composed of POLR3A/RPC1, POLR3B/RPC2, POLR1C/RPAC1, POLR1D/RPAC2, POLR3K/RPC10, POLR2E/RPABC1, POLR2F/RPABC2, POLR2H/RPABC3, POLR2K/RPABC4 and POLR2L/RPABC5; a mobile stalk composed of two subunits POLR3H/RPC8 and CRCP/RPC9, protruding from the core and functioning primarily in transcription initiation; and additional subunits homologous to general transcription factors of the RNA polymerase II machinery, POLR3C/RPC3-POLR3F/RPC6-POLR3G/RPC7 heterotrimer required for transcription initiation and POLR3D/RPC4-POLR3E/RPC5 heterodimer involved in both transcription initiation and termination.</text>
</comment>
<comment type="subcellular location">
    <subcellularLocation>
        <location evidence="1">Nucleus</location>
    </subcellularLocation>
    <subcellularLocation>
        <location evidence="5">Cell membrane</location>
        <topology evidence="5">Peripheral membrane protein</topology>
        <orientation evidence="5">Cytoplasmic side</orientation>
    </subcellularLocation>
</comment>
<comment type="tissue specificity">
    <text evidence="4">Ubiquitous. Most prevalent in testis.</text>
</comment>
<comment type="similarity">
    <text evidence="6">Belongs to the eukaryotic RPC9 RNA polymerase subunit family.</text>
</comment>
<organism>
    <name type="scientific">Mus musculus</name>
    <name type="common">Mouse</name>
    <dbReference type="NCBI Taxonomy" id="10090"/>
    <lineage>
        <taxon>Eukaryota</taxon>
        <taxon>Metazoa</taxon>
        <taxon>Chordata</taxon>
        <taxon>Craniata</taxon>
        <taxon>Vertebrata</taxon>
        <taxon>Euteleostomi</taxon>
        <taxon>Mammalia</taxon>
        <taxon>Eutheria</taxon>
        <taxon>Euarchontoglires</taxon>
        <taxon>Glires</taxon>
        <taxon>Rodentia</taxon>
        <taxon>Myomorpha</taxon>
        <taxon>Muroidea</taxon>
        <taxon>Muridae</taxon>
        <taxon>Murinae</taxon>
        <taxon>Mus</taxon>
        <taxon>Mus</taxon>
    </lineage>
</organism>
<sequence>MEVKDANAALLSNYEVFQLLTDLKEQRKESGKNKHSAGQQNLNAITYETLKYISKTPCRNQSPAIVQEFLTAMKSHKLTKAEKLQLLNHRPMTAVEIQLMVEESEERLTEEQIEALLHTVTSILPAGPEDEQSKSTSNDVAMEEEEPA</sequence>
<reference key="1">
    <citation type="journal article" date="1997" name="Endocrinology">
        <title>Inhibitory effect of calcitonin gene-related peptide on myometrial contractility is diminished at parturition.</title>
        <authorList>
            <person name="Naghashpour M."/>
            <person name="Rosenblatt M.I."/>
            <person name="Dickerson I.M."/>
            <person name="Dahl G.P."/>
        </authorList>
    </citation>
    <scope>NUCLEOTIDE SEQUENCE [MRNA]</scope>
</reference>
<reference key="2">
    <citation type="journal article" date="1999" name="Endocrinology">
        <title>Testes exhibit elevated expression of calcitonin gene-related peptide receptor component protein.</title>
        <authorList>
            <person name="Balkan W."/>
            <person name="Oates E.L."/>
            <person name="Howard G.A."/>
            <person name="Roos B.A."/>
        </authorList>
    </citation>
    <scope>NUCLEOTIDE SEQUENCE [MRNA]</scope>
    <scope>TISSUE SPECIFICITY</scope>
</reference>
<reference key="3">
    <citation type="journal article" date="2004" name="Genome Res.">
        <title>The status, quality, and expansion of the NIH full-length cDNA project: the Mammalian Gene Collection (MGC).</title>
        <authorList>
            <consortium name="The MGC Project Team"/>
        </authorList>
    </citation>
    <scope>NUCLEOTIDE SEQUENCE [LARGE SCALE MRNA]</scope>
</reference>
<reference key="4">
    <citation type="journal article" date="2000" name="J. Biol. Chem.">
        <title>CGRP-RCP, a novel protein required for signal transduction at calcitonin gene-related peptide and adrenomedullin receptors.</title>
        <authorList>
            <person name="Evans B.N."/>
            <person name="Rosenblatt M.I."/>
            <person name="Mnayer L.O."/>
            <person name="Oliver K.R."/>
            <person name="Dickerson I.M."/>
        </authorList>
    </citation>
    <scope>FUNCTION</scope>
    <scope>SUBCELLULAR LOCATION</scope>
</reference>
<name>RPC9_MOUSE</name>
<accession>O35427</accession>
<dbReference type="EMBL" id="AF028242">
    <property type="protein sequence ID" value="AAB84046.1"/>
    <property type="molecule type" value="mRNA"/>
</dbReference>
<dbReference type="EMBL" id="AF118271">
    <property type="protein sequence ID" value="AAD17244.1"/>
    <property type="molecule type" value="mRNA"/>
</dbReference>
<dbReference type="EMBL" id="BC012676">
    <property type="protein sequence ID" value="AAH12676.1"/>
    <property type="molecule type" value="mRNA"/>
</dbReference>
<dbReference type="CCDS" id="CCDS19706.1"/>
<dbReference type="RefSeq" id="NP_031787.1">
    <property type="nucleotide sequence ID" value="NM_007761.2"/>
</dbReference>
<dbReference type="SMR" id="O35427"/>
<dbReference type="BioGRID" id="198872">
    <property type="interactions" value="1"/>
</dbReference>
<dbReference type="CORUM" id="O35427"/>
<dbReference type="FunCoup" id="O35427">
    <property type="interactions" value="729"/>
</dbReference>
<dbReference type="STRING" id="10090.ENSMUSP00000026608"/>
<dbReference type="PhosphoSitePlus" id="O35427"/>
<dbReference type="PaxDb" id="10090-ENSMUSP00000026608"/>
<dbReference type="PeptideAtlas" id="O35427"/>
<dbReference type="ProteomicsDB" id="260924"/>
<dbReference type="Pumba" id="O35427"/>
<dbReference type="Antibodypedia" id="34815">
    <property type="antibodies" value="109 antibodies from 25 providers"/>
</dbReference>
<dbReference type="DNASU" id="12909"/>
<dbReference type="Ensembl" id="ENSMUST00000026608.11">
    <property type="protein sequence ID" value="ENSMUSP00000026608.8"/>
    <property type="gene ID" value="ENSMUSG00000025532.14"/>
</dbReference>
<dbReference type="GeneID" id="12909"/>
<dbReference type="KEGG" id="mmu:12909"/>
<dbReference type="UCSC" id="uc008zua.1">
    <property type="organism name" value="mouse"/>
</dbReference>
<dbReference type="AGR" id="MGI:1100818"/>
<dbReference type="CTD" id="27297"/>
<dbReference type="MGI" id="MGI:1100818">
    <property type="gene designation" value="Crcp"/>
</dbReference>
<dbReference type="VEuPathDB" id="HostDB:ENSMUSG00000025532"/>
<dbReference type="eggNOG" id="KOG4168">
    <property type="taxonomic scope" value="Eukaryota"/>
</dbReference>
<dbReference type="GeneTree" id="ENSGT00390000014189"/>
<dbReference type="HOGENOM" id="CLU_092529_5_0_1"/>
<dbReference type="InParanoid" id="O35427"/>
<dbReference type="OMA" id="VMIINLR"/>
<dbReference type="OrthoDB" id="1746530at2759"/>
<dbReference type="PhylomeDB" id="O35427"/>
<dbReference type="TreeFam" id="TF323294"/>
<dbReference type="Reactome" id="R-MMU-76061">
    <property type="pathway name" value="RNA Polymerase III Transcription Initiation From Type 1 Promoter"/>
</dbReference>
<dbReference type="Reactome" id="R-MMU-76066">
    <property type="pathway name" value="RNA Polymerase III Transcription Initiation From Type 2 Promoter"/>
</dbReference>
<dbReference type="Reactome" id="R-MMU-76071">
    <property type="pathway name" value="RNA Polymerase III Transcription Initiation From Type 3 Promoter"/>
</dbReference>
<dbReference type="BioGRID-ORCS" id="12909">
    <property type="hits" value="27 hits in 79 CRISPR screens"/>
</dbReference>
<dbReference type="ChiTaRS" id="Crcp">
    <property type="organism name" value="mouse"/>
</dbReference>
<dbReference type="PRO" id="PR:O35427"/>
<dbReference type="Proteomes" id="UP000000589">
    <property type="component" value="Chromosome 5"/>
</dbReference>
<dbReference type="RNAct" id="O35427">
    <property type="molecule type" value="protein"/>
</dbReference>
<dbReference type="Bgee" id="ENSMUSG00000025532">
    <property type="expression patterns" value="Expressed in dentate gyrus of hippocampal formation granule cell and 271 other cell types or tissues"/>
</dbReference>
<dbReference type="ExpressionAtlas" id="O35427">
    <property type="expression patterns" value="baseline and differential"/>
</dbReference>
<dbReference type="GO" id="GO:0001669">
    <property type="term" value="C:acrosomal vesicle"/>
    <property type="evidence" value="ECO:0000314"/>
    <property type="project" value="MGI"/>
</dbReference>
<dbReference type="GO" id="GO:0009360">
    <property type="term" value="C:DNA polymerase III complex"/>
    <property type="evidence" value="ECO:0000250"/>
    <property type="project" value="UniProtKB"/>
</dbReference>
<dbReference type="GO" id="GO:0005886">
    <property type="term" value="C:plasma membrane"/>
    <property type="evidence" value="ECO:0007669"/>
    <property type="project" value="UniProtKB-SubCell"/>
</dbReference>
<dbReference type="GO" id="GO:0005666">
    <property type="term" value="C:RNA polymerase III complex"/>
    <property type="evidence" value="ECO:0007669"/>
    <property type="project" value="Ensembl"/>
</dbReference>
<dbReference type="GO" id="GO:0001635">
    <property type="term" value="F:calcitonin gene-related peptide receptor activity"/>
    <property type="evidence" value="ECO:0000314"/>
    <property type="project" value="MGI"/>
</dbReference>
<dbReference type="GO" id="GO:0003899">
    <property type="term" value="F:DNA-directed RNA polymerase activity"/>
    <property type="evidence" value="ECO:0000250"/>
    <property type="project" value="UniProtKB"/>
</dbReference>
<dbReference type="GO" id="GO:0000166">
    <property type="term" value="F:nucleotide binding"/>
    <property type="evidence" value="ECO:0007669"/>
    <property type="project" value="InterPro"/>
</dbReference>
<dbReference type="GO" id="GO:0051607">
    <property type="term" value="P:defense response to virus"/>
    <property type="evidence" value="ECO:0007669"/>
    <property type="project" value="UniProtKB-KW"/>
</dbReference>
<dbReference type="GO" id="GO:0045087">
    <property type="term" value="P:innate immune response"/>
    <property type="evidence" value="ECO:0007669"/>
    <property type="project" value="UniProtKB-KW"/>
</dbReference>
<dbReference type="GO" id="GO:0007218">
    <property type="term" value="P:neuropeptide signaling pathway"/>
    <property type="evidence" value="ECO:0000314"/>
    <property type="project" value="MGI"/>
</dbReference>
<dbReference type="GO" id="GO:0006383">
    <property type="term" value="P:transcription by RNA polymerase III"/>
    <property type="evidence" value="ECO:0000250"/>
    <property type="project" value="UniProtKB"/>
</dbReference>
<dbReference type="GO" id="GO:0006384">
    <property type="term" value="P:transcription initiation at RNA polymerase III promoter"/>
    <property type="evidence" value="ECO:0007669"/>
    <property type="project" value="InterPro"/>
</dbReference>
<dbReference type="FunFam" id="1.20.1250.40:FF:000002">
    <property type="entry name" value="DNA-directed RNA polymerase III subunit RPC9"/>
    <property type="match status" value="1"/>
</dbReference>
<dbReference type="Gene3D" id="1.20.1250.40">
    <property type="match status" value="1"/>
</dbReference>
<dbReference type="InterPro" id="IPR010997">
    <property type="entry name" value="HRDC-like_sf"/>
</dbReference>
<dbReference type="InterPro" id="IPR006590">
    <property type="entry name" value="RNA_pol_Rpb4/RPC9_core"/>
</dbReference>
<dbReference type="InterPro" id="IPR005574">
    <property type="entry name" value="Rpb4/RPC9"/>
</dbReference>
<dbReference type="InterPro" id="IPR038324">
    <property type="entry name" value="Rpb4/RPC9_sf"/>
</dbReference>
<dbReference type="InterPro" id="IPR038846">
    <property type="entry name" value="RPC9"/>
</dbReference>
<dbReference type="PANTHER" id="PTHR15561">
    <property type="entry name" value="CALCITONIN GENE-RELATED PEPTIDE-RECEPTOR COMPONENT PROTEIN"/>
    <property type="match status" value="1"/>
</dbReference>
<dbReference type="PANTHER" id="PTHR15561:SF0">
    <property type="entry name" value="DNA-DIRECTED RNA POLYMERASE III SUBUNIT RPC9"/>
    <property type="match status" value="1"/>
</dbReference>
<dbReference type="Pfam" id="PF03874">
    <property type="entry name" value="RNA_pol_Rpb4"/>
    <property type="match status" value="1"/>
</dbReference>
<dbReference type="SMART" id="SM00657">
    <property type="entry name" value="RPOL4c"/>
    <property type="match status" value="1"/>
</dbReference>
<dbReference type="SUPFAM" id="SSF47819">
    <property type="entry name" value="HRDC-like"/>
    <property type="match status" value="1"/>
</dbReference>
<protein>
    <recommendedName>
        <fullName>DNA-directed RNA polymerase III subunit RPC9</fullName>
        <shortName>RNA polymerase III subunit C9</shortName>
    </recommendedName>
    <alternativeName>
        <fullName>Calcitonin gene-related peptide-receptor component protein</fullName>
        <shortName>CGRP-RCP</shortName>
        <shortName>CGRP-receptor component protein</shortName>
        <shortName>CGRPRCP</shortName>
    </alternativeName>
</protein>
<keyword id="KW-0051">Antiviral defense</keyword>
<keyword id="KW-1003">Cell membrane</keyword>
<keyword id="KW-0240">DNA-directed RNA polymerase</keyword>
<keyword id="KW-0391">Immunity</keyword>
<keyword id="KW-0399">Innate immunity</keyword>
<keyword id="KW-0472">Membrane</keyword>
<keyword id="KW-0539">Nucleus</keyword>
<keyword id="KW-1185">Reference proteome</keyword>
<keyword id="KW-0804">Transcription</keyword>